<comment type="function">
    <text evidence="2">With S4 and S5 plays an important role in translational accuracy.</text>
</comment>
<comment type="function">
    <text evidence="2">Interacts with and stabilizes bases of the 16S rRNA that are involved in tRNA selection in the A site and with the mRNA backbone. Located at the interface of the 30S and 50S subunits, it traverses the body of the 30S subunit contacting proteins on the other side and probably holding the rRNA structure together. The combined cluster of proteins S8, S12 and S17 appears to hold together the shoulder and platform of the 30S subunit.</text>
</comment>
<comment type="subunit">
    <text evidence="2">Part of the 30S ribosomal subunit. Contacts proteins S8 and S17. May interact with IF1 in the 30S initiation complex.</text>
</comment>
<comment type="similarity">
    <text evidence="2">Belongs to the universal ribosomal protein uS12 family.</text>
</comment>
<reference key="1">
    <citation type="journal article" date="2007" name="J. Bacteriol.">
        <title>Complete genome of acute rheumatic fever-associated serotype M5 Streptococcus pyogenes strain Manfredo.</title>
        <authorList>
            <person name="Holden M.T.G."/>
            <person name="Scott A."/>
            <person name="Cherevach I."/>
            <person name="Chillingworth T."/>
            <person name="Churcher C."/>
            <person name="Cronin A."/>
            <person name="Dowd L."/>
            <person name="Feltwell T."/>
            <person name="Hamlin N."/>
            <person name="Holroyd S."/>
            <person name="Jagels K."/>
            <person name="Moule S."/>
            <person name="Mungall K."/>
            <person name="Quail M.A."/>
            <person name="Price C."/>
            <person name="Rabbinowitsch E."/>
            <person name="Sharp S."/>
            <person name="Skelton J."/>
            <person name="Whitehead S."/>
            <person name="Barrell B.G."/>
            <person name="Kehoe M."/>
            <person name="Parkhill J."/>
        </authorList>
    </citation>
    <scope>NUCLEOTIDE SEQUENCE [LARGE SCALE GENOMIC DNA]</scope>
    <source>
        <strain>Manfredo</strain>
    </source>
</reference>
<keyword id="KW-0488">Methylation</keyword>
<keyword id="KW-0687">Ribonucleoprotein</keyword>
<keyword id="KW-0689">Ribosomal protein</keyword>
<keyword id="KW-0694">RNA-binding</keyword>
<keyword id="KW-0699">rRNA-binding</keyword>
<keyword id="KW-0820">tRNA-binding</keyword>
<evidence type="ECO:0000250" key="1"/>
<evidence type="ECO:0000255" key="2">
    <source>
        <dbReference type="HAMAP-Rule" id="MF_00403"/>
    </source>
</evidence>
<evidence type="ECO:0000256" key="3">
    <source>
        <dbReference type="SAM" id="MobiDB-lite"/>
    </source>
</evidence>
<evidence type="ECO:0000305" key="4"/>
<gene>
    <name evidence="2" type="primary">rpsL</name>
    <name type="ordered locus">SpyM50209</name>
</gene>
<organism>
    <name type="scientific">Streptococcus pyogenes serotype M5 (strain Manfredo)</name>
    <dbReference type="NCBI Taxonomy" id="160491"/>
    <lineage>
        <taxon>Bacteria</taxon>
        <taxon>Bacillati</taxon>
        <taxon>Bacillota</taxon>
        <taxon>Bacilli</taxon>
        <taxon>Lactobacillales</taxon>
        <taxon>Streptococcaceae</taxon>
        <taxon>Streptococcus</taxon>
    </lineage>
</organism>
<name>RS12_STRPG</name>
<dbReference type="EMBL" id="AM295007">
    <property type="protein sequence ID" value="CAM29552.1"/>
    <property type="molecule type" value="Genomic_DNA"/>
</dbReference>
<dbReference type="RefSeq" id="WP_002986049.1">
    <property type="nucleotide sequence ID" value="NC_009332.1"/>
</dbReference>
<dbReference type="SMR" id="A2RCI0"/>
<dbReference type="GeneID" id="69900197"/>
<dbReference type="KEGG" id="spf:SpyM50209"/>
<dbReference type="HOGENOM" id="CLU_104295_1_2_9"/>
<dbReference type="GO" id="GO:0015935">
    <property type="term" value="C:small ribosomal subunit"/>
    <property type="evidence" value="ECO:0007669"/>
    <property type="project" value="InterPro"/>
</dbReference>
<dbReference type="GO" id="GO:0019843">
    <property type="term" value="F:rRNA binding"/>
    <property type="evidence" value="ECO:0007669"/>
    <property type="project" value="UniProtKB-UniRule"/>
</dbReference>
<dbReference type="GO" id="GO:0003735">
    <property type="term" value="F:structural constituent of ribosome"/>
    <property type="evidence" value="ECO:0007669"/>
    <property type="project" value="InterPro"/>
</dbReference>
<dbReference type="GO" id="GO:0000049">
    <property type="term" value="F:tRNA binding"/>
    <property type="evidence" value="ECO:0007669"/>
    <property type="project" value="UniProtKB-UniRule"/>
</dbReference>
<dbReference type="GO" id="GO:0006412">
    <property type="term" value="P:translation"/>
    <property type="evidence" value="ECO:0007669"/>
    <property type="project" value="UniProtKB-UniRule"/>
</dbReference>
<dbReference type="CDD" id="cd03368">
    <property type="entry name" value="Ribosomal_S12"/>
    <property type="match status" value="1"/>
</dbReference>
<dbReference type="FunFam" id="2.40.50.140:FF:000001">
    <property type="entry name" value="30S ribosomal protein S12"/>
    <property type="match status" value="1"/>
</dbReference>
<dbReference type="Gene3D" id="2.40.50.140">
    <property type="entry name" value="Nucleic acid-binding proteins"/>
    <property type="match status" value="1"/>
</dbReference>
<dbReference type="HAMAP" id="MF_00403_B">
    <property type="entry name" value="Ribosomal_uS12_B"/>
    <property type="match status" value="1"/>
</dbReference>
<dbReference type="InterPro" id="IPR012340">
    <property type="entry name" value="NA-bd_OB-fold"/>
</dbReference>
<dbReference type="InterPro" id="IPR006032">
    <property type="entry name" value="Ribosomal_uS12"/>
</dbReference>
<dbReference type="InterPro" id="IPR005679">
    <property type="entry name" value="Ribosomal_uS12_bac"/>
</dbReference>
<dbReference type="NCBIfam" id="TIGR00981">
    <property type="entry name" value="rpsL_bact"/>
    <property type="match status" value="1"/>
</dbReference>
<dbReference type="PANTHER" id="PTHR11652">
    <property type="entry name" value="30S RIBOSOMAL PROTEIN S12 FAMILY MEMBER"/>
    <property type="match status" value="1"/>
</dbReference>
<dbReference type="Pfam" id="PF00164">
    <property type="entry name" value="Ribosom_S12_S23"/>
    <property type="match status" value="1"/>
</dbReference>
<dbReference type="PRINTS" id="PR01034">
    <property type="entry name" value="RIBOSOMALS12"/>
</dbReference>
<dbReference type="SUPFAM" id="SSF50249">
    <property type="entry name" value="Nucleic acid-binding proteins"/>
    <property type="match status" value="1"/>
</dbReference>
<dbReference type="PROSITE" id="PS00055">
    <property type="entry name" value="RIBOSOMAL_S12"/>
    <property type="match status" value="1"/>
</dbReference>
<protein>
    <recommendedName>
        <fullName evidence="2">Small ribosomal subunit protein uS12</fullName>
    </recommendedName>
    <alternativeName>
        <fullName evidence="4">30S ribosomal protein S12</fullName>
    </alternativeName>
</protein>
<accession>A2RCI0</accession>
<sequence>MPTINQLVRKPRKSKIEKSDSPALNIGYNSHKKVQTKMAAPQKRGVATRVGTMTPKKPNSALRKFARVRLSNLIEVTAYIPGIGHNLQEHSVVLIRGGRVKDLPGVRYHIVRGALDTAGVADRKQGRSKYGAKRPKG</sequence>
<feature type="chain" id="PRO_0000296034" description="Small ribosomal subunit protein uS12">
    <location>
        <begin position="1"/>
        <end position="137"/>
    </location>
</feature>
<feature type="region of interest" description="Disordered" evidence="3">
    <location>
        <begin position="1"/>
        <end position="21"/>
    </location>
</feature>
<feature type="region of interest" description="Disordered" evidence="3">
    <location>
        <begin position="33"/>
        <end position="57"/>
    </location>
</feature>
<feature type="modified residue" description="3-methylthioaspartic acid" evidence="1">
    <location>
        <position position="102"/>
    </location>
</feature>
<proteinExistence type="inferred from homology"/>